<proteinExistence type="inferred from homology"/>
<gene>
    <name evidence="1" type="primary">hemH</name>
    <name type="ordered locus">BPP3489</name>
</gene>
<name>HEMH_BORPA</name>
<sequence length="362" mass="40902">MFLRLFKYLWPERYLPEIPAQDPFDENPPPCGPGRVGVLLVNLGTPDEPTRGAIRRYLGEFLSDPRVIEIPRYLWMPILHGLVLAMRPKKLAPRYAGIWMEEGSPLLVYSQRQAAGVRQGLAARGVHAEVELAMRYGKPSIPAAITALRERGCDHILAVPLYPQYAASTTATVVDAVTRHAGRLRDQPALRFVKRFHNDPAYVEAQAGRIAEFWQAHGRPQKLVMSFHGLPRYSIELGDPYYRDCLDTARLLRERLGLREDEVEVTFQSRFGSARWLEPYTEPTLAELARQGVTEVDVVCPGFVADCLETLEEISQECRDAFVAAGGRQFRYIPALNDCPPWIEGLTDLVERQLRGWPTGNP</sequence>
<protein>
    <recommendedName>
        <fullName evidence="1">Ferrochelatase</fullName>
        <ecNumber evidence="1">4.98.1.1</ecNumber>
    </recommendedName>
    <alternativeName>
        <fullName evidence="1">Heme synthase</fullName>
    </alternativeName>
    <alternativeName>
        <fullName evidence="1">Protoheme ferro-lyase</fullName>
    </alternativeName>
</protein>
<keyword id="KW-0963">Cytoplasm</keyword>
<keyword id="KW-0350">Heme biosynthesis</keyword>
<keyword id="KW-0408">Iron</keyword>
<keyword id="KW-0456">Lyase</keyword>
<keyword id="KW-0479">Metal-binding</keyword>
<keyword id="KW-0627">Porphyrin biosynthesis</keyword>
<evidence type="ECO:0000255" key="1">
    <source>
        <dbReference type="HAMAP-Rule" id="MF_00323"/>
    </source>
</evidence>
<accession>Q7W515</accession>
<organism>
    <name type="scientific">Bordetella parapertussis (strain 12822 / ATCC BAA-587 / NCTC 13253)</name>
    <dbReference type="NCBI Taxonomy" id="257311"/>
    <lineage>
        <taxon>Bacteria</taxon>
        <taxon>Pseudomonadati</taxon>
        <taxon>Pseudomonadota</taxon>
        <taxon>Betaproteobacteria</taxon>
        <taxon>Burkholderiales</taxon>
        <taxon>Alcaligenaceae</taxon>
        <taxon>Bordetella</taxon>
    </lineage>
</organism>
<reference key="1">
    <citation type="journal article" date="2003" name="Nat. Genet.">
        <title>Comparative analysis of the genome sequences of Bordetella pertussis, Bordetella parapertussis and Bordetella bronchiseptica.</title>
        <authorList>
            <person name="Parkhill J."/>
            <person name="Sebaihia M."/>
            <person name="Preston A."/>
            <person name="Murphy L.D."/>
            <person name="Thomson N.R."/>
            <person name="Harris D.E."/>
            <person name="Holden M.T.G."/>
            <person name="Churcher C.M."/>
            <person name="Bentley S.D."/>
            <person name="Mungall K.L."/>
            <person name="Cerdeno-Tarraga A.-M."/>
            <person name="Temple L."/>
            <person name="James K.D."/>
            <person name="Harris B."/>
            <person name="Quail M.A."/>
            <person name="Achtman M."/>
            <person name="Atkin R."/>
            <person name="Baker S."/>
            <person name="Basham D."/>
            <person name="Bason N."/>
            <person name="Cherevach I."/>
            <person name="Chillingworth T."/>
            <person name="Collins M."/>
            <person name="Cronin A."/>
            <person name="Davis P."/>
            <person name="Doggett J."/>
            <person name="Feltwell T."/>
            <person name="Goble A."/>
            <person name="Hamlin N."/>
            <person name="Hauser H."/>
            <person name="Holroyd S."/>
            <person name="Jagels K."/>
            <person name="Leather S."/>
            <person name="Moule S."/>
            <person name="Norberczak H."/>
            <person name="O'Neil S."/>
            <person name="Ormond D."/>
            <person name="Price C."/>
            <person name="Rabbinowitsch E."/>
            <person name="Rutter S."/>
            <person name="Sanders M."/>
            <person name="Saunders D."/>
            <person name="Seeger K."/>
            <person name="Sharp S."/>
            <person name="Simmonds M."/>
            <person name="Skelton J."/>
            <person name="Squares R."/>
            <person name="Squares S."/>
            <person name="Stevens K."/>
            <person name="Unwin L."/>
            <person name="Whitehead S."/>
            <person name="Barrell B.G."/>
            <person name="Maskell D.J."/>
        </authorList>
    </citation>
    <scope>NUCLEOTIDE SEQUENCE [LARGE SCALE GENOMIC DNA]</scope>
    <source>
        <strain>12822 / ATCC BAA-587 / NCTC 13253</strain>
    </source>
</reference>
<feature type="chain" id="PRO_0000175117" description="Ferrochelatase">
    <location>
        <begin position="1"/>
        <end position="362"/>
    </location>
</feature>
<feature type="binding site" evidence="1">
    <location>
        <position position="228"/>
    </location>
    <ligand>
        <name>Fe cation</name>
        <dbReference type="ChEBI" id="CHEBI:24875"/>
    </ligand>
</feature>
<feature type="binding site" evidence="1">
    <location>
        <position position="309"/>
    </location>
    <ligand>
        <name>Fe cation</name>
        <dbReference type="ChEBI" id="CHEBI:24875"/>
    </ligand>
</feature>
<comment type="function">
    <text evidence="1">Catalyzes the ferrous insertion into protoporphyrin IX.</text>
</comment>
<comment type="catalytic activity">
    <reaction evidence="1">
        <text>heme b + 2 H(+) = protoporphyrin IX + Fe(2+)</text>
        <dbReference type="Rhea" id="RHEA:22584"/>
        <dbReference type="ChEBI" id="CHEBI:15378"/>
        <dbReference type="ChEBI" id="CHEBI:29033"/>
        <dbReference type="ChEBI" id="CHEBI:57306"/>
        <dbReference type="ChEBI" id="CHEBI:60344"/>
        <dbReference type="EC" id="4.98.1.1"/>
    </reaction>
</comment>
<comment type="pathway">
    <text evidence="1">Porphyrin-containing compound metabolism; protoheme biosynthesis; protoheme from protoporphyrin-IX: step 1/1.</text>
</comment>
<comment type="subcellular location">
    <subcellularLocation>
        <location evidence="1">Cytoplasm</location>
    </subcellularLocation>
</comment>
<comment type="similarity">
    <text evidence="1">Belongs to the ferrochelatase family.</text>
</comment>
<dbReference type="EC" id="4.98.1.1" evidence="1"/>
<dbReference type="EMBL" id="BX640433">
    <property type="protein sequence ID" value="CAE38773.1"/>
    <property type="molecule type" value="Genomic_DNA"/>
</dbReference>
<dbReference type="RefSeq" id="WP_010929086.1">
    <property type="nucleotide sequence ID" value="NC_002928.3"/>
</dbReference>
<dbReference type="SMR" id="Q7W515"/>
<dbReference type="GeneID" id="93205275"/>
<dbReference type="KEGG" id="bpa:BPP3489"/>
<dbReference type="HOGENOM" id="CLU_018884_0_0_4"/>
<dbReference type="UniPathway" id="UPA00252">
    <property type="reaction ID" value="UER00325"/>
</dbReference>
<dbReference type="Proteomes" id="UP000001421">
    <property type="component" value="Chromosome"/>
</dbReference>
<dbReference type="GO" id="GO:0005737">
    <property type="term" value="C:cytoplasm"/>
    <property type="evidence" value="ECO:0007669"/>
    <property type="project" value="UniProtKB-SubCell"/>
</dbReference>
<dbReference type="GO" id="GO:0004325">
    <property type="term" value="F:ferrochelatase activity"/>
    <property type="evidence" value="ECO:0007669"/>
    <property type="project" value="UniProtKB-UniRule"/>
</dbReference>
<dbReference type="GO" id="GO:0046872">
    <property type="term" value="F:metal ion binding"/>
    <property type="evidence" value="ECO:0007669"/>
    <property type="project" value="UniProtKB-KW"/>
</dbReference>
<dbReference type="GO" id="GO:0006783">
    <property type="term" value="P:heme biosynthetic process"/>
    <property type="evidence" value="ECO:0007669"/>
    <property type="project" value="UniProtKB-UniRule"/>
</dbReference>
<dbReference type="CDD" id="cd00419">
    <property type="entry name" value="Ferrochelatase_C"/>
    <property type="match status" value="1"/>
</dbReference>
<dbReference type="CDD" id="cd03411">
    <property type="entry name" value="Ferrochelatase_N"/>
    <property type="match status" value="1"/>
</dbReference>
<dbReference type="FunFam" id="3.40.50.1400:FF:000002">
    <property type="entry name" value="Ferrochelatase"/>
    <property type="match status" value="1"/>
</dbReference>
<dbReference type="Gene3D" id="3.40.50.1400">
    <property type="match status" value="2"/>
</dbReference>
<dbReference type="HAMAP" id="MF_00323">
    <property type="entry name" value="Ferrochelatase"/>
    <property type="match status" value="1"/>
</dbReference>
<dbReference type="InterPro" id="IPR001015">
    <property type="entry name" value="Ferrochelatase"/>
</dbReference>
<dbReference type="InterPro" id="IPR019772">
    <property type="entry name" value="Ferrochelatase_AS"/>
</dbReference>
<dbReference type="InterPro" id="IPR033644">
    <property type="entry name" value="Ferrochelatase_C"/>
</dbReference>
<dbReference type="InterPro" id="IPR033659">
    <property type="entry name" value="Ferrochelatase_N"/>
</dbReference>
<dbReference type="NCBIfam" id="TIGR00109">
    <property type="entry name" value="hemH"/>
    <property type="match status" value="1"/>
</dbReference>
<dbReference type="PANTHER" id="PTHR11108">
    <property type="entry name" value="FERROCHELATASE"/>
    <property type="match status" value="1"/>
</dbReference>
<dbReference type="PANTHER" id="PTHR11108:SF1">
    <property type="entry name" value="FERROCHELATASE, MITOCHONDRIAL"/>
    <property type="match status" value="1"/>
</dbReference>
<dbReference type="Pfam" id="PF00762">
    <property type="entry name" value="Ferrochelatase"/>
    <property type="match status" value="1"/>
</dbReference>
<dbReference type="SUPFAM" id="SSF53800">
    <property type="entry name" value="Chelatase"/>
    <property type="match status" value="1"/>
</dbReference>
<dbReference type="PROSITE" id="PS00534">
    <property type="entry name" value="FERROCHELATASE"/>
    <property type="match status" value="1"/>
</dbReference>